<organism>
    <name type="scientific">Lysobacter enzymogenes</name>
    <dbReference type="NCBI Taxonomy" id="69"/>
    <lineage>
        <taxon>Bacteria</taxon>
        <taxon>Pseudomonadati</taxon>
        <taxon>Pseudomonadota</taxon>
        <taxon>Gammaproteobacteria</taxon>
        <taxon>Lysobacterales</taxon>
        <taxon>Lysobacteraceae</taxon>
        <taxon>Lysobacter</taxon>
    </lineage>
</organism>
<protein>
    <recommendedName>
        <fullName evidence="2">Probable ATPase FE772_23070</fullName>
        <ecNumber evidence="4">3.6.4.-</ecNumber>
    </recommendedName>
</protein>
<name>Y3070_LYSEN</name>
<keyword id="KW-0051">Antiviral defense</keyword>
<keyword id="KW-0067">ATP-binding</keyword>
<keyword id="KW-0378">Hydrolase</keyword>
<keyword id="KW-0547">Nucleotide-binding</keyword>
<evidence type="ECO:0000269" key="1">
    <source>
    </source>
</evidence>
<evidence type="ECO:0000303" key="2">
    <source>
    </source>
</evidence>
<evidence type="ECO:0000305" key="3"/>
<evidence type="ECO:0000305" key="4">
    <source>
    </source>
</evidence>
<evidence type="ECO:0000312" key="5">
    <source>
        <dbReference type="EMBL" id="ALN60087.1"/>
    </source>
</evidence>
<evidence type="ECO:0000312" key="6">
    <source>
        <dbReference type="EMBL" id="QCW28098.1"/>
    </source>
</evidence>
<evidence type="ECO:0000312" key="7">
    <source>
        <dbReference type="Proteomes" id="UP000061569"/>
    </source>
</evidence>
<feature type="chain" id="PRO_0000455582" description="Probable ATPase FE772_23070">
    <location>
        <begin position="1"/>
        <end position="1068"/>
    </location>
</feature>
<feature type="binding site" evidence="3">
    <location>
        <begin position="217"/>
        <end position="224"/>
    </location>
    <ligand>
        <name>ATP</name>
        <dbReference type="ChEBI" id="CHEBI:30616"/>
    </ligand>
</feature>
<feature type="mutagenesis site" description="4-gene operon no longer protects against phage." evidence="1">
    <original>K</original>
    <variation>A</variation>
    <location>
        <position position="223"/>
    </location>
</feature>
<sequence>MTPTVPELEFAQATAFESNVPPLFPGRAGPDDGADRLRLRLAVRGWARPLDLIAASNSPDDVMAILGALAAEVETAVQTRPNQWYLSLAARKRELARRDDAQLRAAASASVPGDDDDPVLHAMRIALADAEPTLSALGTDVLAALGNACDWLGERWRHAVGAQRIAGELASRALDADLRRMTRDPMVGRSHRDTLARLIGFATAATQTPLSVAYVYGGGGAGKTTLLSFLQRDLSQRAEPVPVVRIDFDEPAIDPTRMVTLNIALVEQLARSVPAVCDRASDMLPALRDTALVQHDAGLSRGGPRKRIKSSRPESMLKAESVASQAASDEGSILYRLLAPDVVAGPILIVFDTAELVLAQSDHVASSLVSWLGFLHNEAGARDLRLVIAGRDPPDDPDLGHAANSLLSRLKDTGARIETPIGLPELDPAEAQQLLRNCGVDDPTAAAEAAAAVPGNPLLLRITADALLQGEAELRESVRRAHRDSRIDADSARNYLLRRVVAHVRDPIARPYVLAATYSPVVTAKLLEEVVIPAVDRSEREPGPGIPANKKAATAKAKRVFDALASTYWLTRQTLRSETVPFNREIRAFALKLLAATPEGALLERDVRQSAAIHHLRRRSADDRALALYHLAVLGHPYTVPRDLASVQTVLRDVIEELPADLRNRLAPPVGSVAPGVARGVARSSIDDMSDSDWQRYLEGDERSKRAGEGAQMVKADRAREALDLYLARPTRPPGLPPTFVIQAQADLGEWDEGIADIDAILEREADDWLARKSIGPEALSRIYWITRLALQAYGRLSTPHAMLLRNASETATGPGLSTLPALIAVAETMSGEPIMAGRMRSQALKTDAAGRTLLCPIHGHLPETIELFDAGIAVVQSDWRQRMIQLAPARLIRANEAHLRDLQSRLDALHAKPIAQVNQLFNKMRTGIAVEPTTMAGLNSAVLLLRGLTPEFYRPLREALLALCENGVASPMMRHAVDPLFERMSIRPAEMEPATFYRRLSNNPNAWCTAFIVYADRCRLLPGLCESLARYADSPKSRRIASSFLAWDKALCRGTSSDWGQPAKTRK</sequence>
<proteinExistence type="evidence at protein level"/>
<dbReference type="EC" id="3.6.4.-" evidence="4"/>
<dbReference type="EMBL" id="CP013140">
    <property type="protein sequence ID" value="ALN60087.1"/>
    <property type="molecule type" value="Genomic_DNA"/>
</dbReference>
<dbReference type="EMBL" id="CP040656">
    <property type="protein sequence ID" value="QCW28098.1"/>
    <property type="molecule type" value="Genomic_DNA"/>
</dbReference>
<dbReference type="RefSeq" id="WP_057949283.1">
    <property type="nucleotide sequence ID" value="NZ_CP013140.1"/>
</dbReference>
<dbReference type="STRING" id="69.GLE_4746"/>
<dbReference type="KEGG" id="lez:GLE_4746"/>
<dbReference type="PATRIC" id="fig|69.6.peg.4680"/>
<dbReference type="Proteomes" id="UP000061569">
    <property type="component" value="Chromosome"/>
</dbReference>
<dbReference type="GO" id="GO:0005524">
    <property type="term" value="F:ATP binding"/>
    <property type="evidence" value="ECO:0007669"/>
    <property type="project" value="UniProtKB-KW"/>
</dbReference>
<dbReference type="GO" id="GO:0016787">
    <property type="term" value="F:hydrolase activity"/>
    <property type="evidence" value="ECO:0007669"/>
    <property type="project" value="UniProtKB-KW"/>
</dbReference>
<dbReference type="GO" id="GO:0051607">
    <property type="term" value="P:defense response to virus"/>
    <property type="evidence" value="ECO:0007669"/>
    <property type="project" value="UniProtKB-KW"/>
</dbReference>
<dbReference type="Gene3D" id="3.40.50.300">
    <property type="entry name" value="P-loop containing nucleotide triphosphate hydrolases"/>
    <property type="match status" value="1"/>
</dbReference>
<dbReference type="InterPro" id="IPR027417">
    <property type="entry name" value="P-loop_NTPase"/>
</dbReference>
<dbReference type="SUPFAM" id="SSF52540">
    <property type="entry name" value="P-loop containing nucleoside triphosphate hydrolases"/>
    <property type="match status" value="1"/>
</dbReference>
<reference evidence="5 7" key="1">
    <citation type="journal article" date="2015" name="BMC Genomics">
        <title>Comparative genomics and metabolic profiling of the genus Lysobacter.</title>
        <authorList>
            <person name="de Bruijn I."/>
            <person name="Cheng X."/>
            <person name="de Jager V."/>
            <person name="Exposito R.G."/>
            <person name="Watrous J."/>
            <person name="Patel N."/>
            <person name="Postma J."/>
            <person name="Dorrestein P.C."/>
            <person name="Kobayashi D."/>
            <person name="Raaijmakers J.M."/>
        </authorList>
    </citation>
    <scope>NUCLEOTIDE SEQUENCE [LARGE SCALE GENOMIC DNA]</scope>
    <source>
        <strain>C3</strain>
    </source>
</reference>
<reference evidence="6" key="2">
    <citation type="journal article" date="2019" name="Appl. Environ. Microbiol.">
        <title>Interspecies and Intraspecies Signals Synergistically Regulate Lysobacter enzymogenes Twitching Motility.</title>
        <authorList>
            <person name="Feng T."/>
            <person name="Han Y."/>
            <person name="Li B."/>
            <person name="Li Z."/>
            <person name="Yu Y."/>
            <person name="Sun Q."/>
            <person name="Li X."/>
            <person name="Du L."/>
            <person name="Zhang X.H."/>
            <person name="Wang Y."/>
        </authorList>
    </citation>
    <scope>NUCLEOTIDE SEQUENCE [LARGE SCALE GENOMIC DNA]</scope>
    <source>
        <strain>YC36</strain>
    </source>
</reference>
<reference key="3">
    <citation type="journal article" date="2022" name="Science">
        <title>Bacterial gasdermins reveal an ancient mechanism of cell death.</title>
        <authorList>
            <person name="Johnson A.G."/>
            <person name="Wein T."/>
            <person name="Mayer M.L."/>
            <person name="Duncan-Lowey B."/>
            <person name="Yirmiya E."/>
            <person name="Oppenheimer-Shaanan Y."/>
            <person name="Amitai G."/>
            <person name="Sorek R."/>
            <person name="Kranzusch P.J."/>
        </authorList>
    </citation>
    <scope>FUNCTION</scope>
    <scope>MUTAGENESIS OF LYS-223</scope>
    <source>
        <strain>YC36</strain>
    </source>
</reference>
<gene>
    <name evidence="6" type="ORF">FE772_23070</name>
    <name evidence="2" type="ORF">Ga0399710_4916</name>
    <name evidence="5" type="ORF">GLE_4746</name>
</gene>
<accession>A0A0S2DN66</accession>
<comment type="function">
    <text evidence="1 4">Involved in defense against bacteriophages. When this probable 4 gene operon (bGSDM-FE772_23060-FE772_23065-FE772_23070) is inserted into E.coli it provides nearly 100-fold protection against phages T5 and T6 and about 8-fold against phage T4. The operon without bGSDM no longer protects against phage (PubMed:35025633). Probably a nucleotide hydrolase, possibly of ATP (Probable).</text>
</comment>